<proteinExistence type="evidence at transcript level"/>
<gene>
    <name evidence="10" type="primary">ubr3</name>
</gene>
<protein>
    <recommendedName>
        <fullName evidence="6">E3 ubiquitin-protein ligase ubr3</fullName>
        <ecNumber evidence="1">2.3.2.27</ecNumber>
    </recommendedName>
    <alternativeName>
        <fullName evidence="7">E3 ubiquitin-protein transferase ubr3</fullName>
    </alternativeName>
</protein>
<dbReference type="EC" id="2.3.2.27" evidence="1"/>
<dbReference type="EMBL" id="CABZ01051288">
    <property type="status" value="NOT_ANNOTATED_CDS"/>
    <property type="molecule type" value="Genomic_DNA"/>
</dbReference>
<dbReference type="EMBL" id="CABZ01051289">
    <property type="status" value="NOT_ANNOTATED_CDS"/>
    <property type="molecule type" value="Genomic_DNA"/>
</dbReference>
<dbReference type="EMBL" id="CABZ01051291">
    <property type="status" value="NOT_ANNOTATED_CDS"/>
    <property type="molecule type" value="Genomic_DNA"/>
</dbReference>
<dbReference type="EMBL" id="CU639483">
    <property type="status" value="NOT_ANNOTATED_CDS"/>
    <property type="molecule type" value="Genomic_DNA"/>
</dbReference>
<dbReference type="EMBL" id="CU986282">
    <property type="status" value="NOT_ANNOTATED_CDS"/>
    <property type="molecule type" value="Genomic_DNA"/>
</dbReference>
<dbReference type="EMBL" id="FP089512">
    <property type="status" value="NOT_ANNOTATED_CDS"/>
    <property type="molecule type" value="Genomic_DNA"/>
</dbReference>
<dbReference type="EMBL" id="FQ790221">
    <property type="status" value="NOT_ANNOTATED_CDS"/>
    <property type="molecule type" value="Genomic_DNA"/>
</dbReference>
<dbReference type="EMBL" id="BC078396">
    <property type="protein sequence ID" value="AAH78396.1"/>
    <property type="molecule type" value="mRNA"/>
</dbReference>
<dbReference type="EMBL" id="BC116612">
    <property type="protein sequence ID" value="AAI16613.1"/>
    <property type="molecule type" value="mRNA"/>
</dbReference>
<dbReference type="EMBL" id="BC124477">
    <property type="protein sequence ID" value="AAI24478.1"/>
    <property type="molecule type" value="mRNA"/>
</dbReference>
<dbReference type="RefSeq" id="XP_017213227.1">
    <property type="nucleotide sequence ID" value="XM_017357738.3"/>
</dbReference>
<dbReference type="SMR" id="F1QJX5"/>
<dbReference type="FunCoup" id="F1QJX5">
    <property type="interactions" value="1197"/>
</dbReference>
<dbReference type="STRING" id="7955.ENSDARP00000156490"/>
<dbReference type="PaxDb" id="7955-ENSDARP00000111269"/>
<dbReference type="Ensembl" id="ENSDART00000181059">
    <property type="protein sequence ID" value="ENSDARP00000156490"/>
    <property type="gene ID" value="ENSDARG00000042508"/>
</dbReference>
<dbReference type="GeneID" id="553247"/>
<dbReference type="AGR" id="ZFIN:ZDB-GENE-030131-1473"/>
<dbReference type="CTD" id="130507"/>
<dbReference type="ZFIN" id="ZDB-GENE-030131-1473">
    <property type="gene designation" value="ubr3"/>
</dbReference>
<dbReference type="eggNOG" id="KOG1139">
    <property type="taxonomic scope" value="Eukaryota"/>
</dbReference>
<dbReference type="InParanoid" id="F1QJX5"/>
<dbReference type="OMA" id="LTRAWCT"/>
<dbReference type="OrthoDB" id="15304at2759"/>
<dbReference type="PhylomeDB" id="F1QJX5"/>
<dbReference type="TreeFam" id="TF323875"/>
<dbReference type="UniPathway" id="UPA00143"/>
<dbReference type="PRO" id="PR:F1QJX5"/>
<dbReference type="Proteomes" id="UP000000437">
    <property type="component" value="Chromosome 9"/>
</dbReference>
<dbReference type="Bgee" id="ENSDARG00000042508">
    <property type="expression patterns" value="Expressed in cleaving embryo and 27 other cell types or tissues"/>
</dbReference>
<dbReference type="ExpressionAtlas" id="F1QJX5">
    <property type="expression patterns" value="baseline and differential"/>
</dbReference>
<dbReference type="GO" id="GO:0005737">
    <property type="term" value="C:cytoplasm"/>
    <property type="evidence" value="ECO:0000318"/>
    <property type="project" value="GO_Central"/>
</dbReference>
<dbReference type="GO" id="GO:0000151">
    <property type="term" value="C:ubiquitin ligase complex"/>
    <property type="evidence" value="ECO:0000318"/>
    <property type="project" value="GO_Central"/>
</dbReference>
<dbReference type="GO" id="GO:0061630">
    <property type="term" value="F:ubiquitin protein ligase activity"/>
    <property type="evidence" value="ECO:0000318"/>
    <property type="project" value="GO_Central"/>
</dbReference>
<dbReference type="GO" id="GO:0008270">
    <property type="term" value="F:zinc ion binding"/>
    <property type="evidence" value="ECO:0007669"/>
    <property type="project" value="UniProtKB-KW"/>
</dbReference>
<dbReference type="GO" id="GO:0048592">
    <property type="term" value="P:eye morphogenesis"/>
    <property type="evidence" value="ECO:0000315"/>
    <property type="project" value="ZFIN"/>
</dbReference>
<dbReference type="GO" id="GO:0016567">
    <property type="term" value="P:protein ubiquitination"/>
    <property type="evidence" value="ECO:0000318"/>
    <property type="project" value="GO_Central"/>
</dbReference>
<dbReference type="GO" id="GO:0071596">
    <property type="term" value="P:ubiquitin-dependent protein catabolic process via the N-end rule pathway"/>
    <property type="evidence" value="ECO:0000318"/>
    <property type="project" value="GO_Central"/>
</dbReference>
<dbReference type="CDD" id="cd16483">
    <property type="entry name" value="RING-H2_UBR3"/>
    <property type="match status" value="1"/>
</dbReference>
<dbReference type="CDD" id="cd19673">
    <property type="entry name" value="UBR-box_UBR3"/>
    <property type="match status" value="1"/>
</dbReference>
<dbReference type="FunFam" id="2.10.110.30:FF:000002">
    <property type="entry name" value="Putative e3 ubiquitin-protein ligase ubr3"/>
    <property type="match status" value="1"/>
</dbReference>
<dbReference type="Gene3D" id="2.10.110.30">
    <property type="match status" value="1"/>
</dbReference>
<dbReference type="InterPro" id="IPR044046">
    <property type="entry name" value="E3_ligase_UBR-like_C"/>
</dbReference>
<dbReference type="InterPro" id="IPR039164">
    <property type="entry name" value="UBR1-like"/>
</dbReference>
<dbReference type="InterPro" id="IPR055194">
    <property type="entry name" value="UBR1-like_winged-helix"/>
</dbReference>
<dbReference type="InterPro" id="IPR001841">
    <property type="entry name" value="Znf_RING"/>
</dbReference>
<dbReference type="InterPro" id="IPR003126">
    <property type="entry name" value="Znf_UBR"/>
</dbReference>
<dbReference type="PANTHER" id="PTHR21497:SF39">
    <property type="entry name" value="E3 UBIQUITIN-PROTEIN LIGASE UBR3"/>
    <property type="match status" value="1"/>
</dbReference>
<dbReference type="PANTHER" id="PTHR21497">
    <property type="entry name" value="UBIQUITIN LIGASE E3 ALPHA-RELATED"/>
    <property type="match status" value="1"/>
</dbReference>
<dbReference type="Pfam" id="PF18995">
    <property type="entry name" value="PRT6_C"/>
    <property type="match status" value="1"/>
</dbReference>
<dbReference type="Pfam" id="PF22960">
    <property type="entry name" value="UBR1-like_wing"/>
    <property type="match status" value="1"/>
</dbReference>
<dbReference type="Pfam" id="PF02207">
    <property type="entry name" value="zf-UBR"/>
    <property type="match status" value="1"/>
</dbReference>
<dbReference type="SMART" id="SM00396">
    <property type="entry name" value="ZnF_UBR1"/>
    <property type="match status" value="1"/>
</dbReference>
<dbReference type="SUPFAM" id="SSF57850">
    <property type="entry name" value="RING/U-box"/>
    <property type="match status" value="1"/>
</dbReference>
<dbReference type="PROSITE" id="PS50089">
    <property type="entry name" value="ZF_RING_2"/>
    <property type="match status" value="1"/>
</dbReference>
<dbReference type="PROSITE" id="PS51157">
    <property type="entry name" value="ZF_UBR"/>
    <property type="match status" value="1"/>
</dbReference>
<organism evidence="9">
    <name type="scientific">Danio rerio</name>
    <name type="common">Zebrafish</name>
    <name type="synonym">Brachydanio rerio</name>
    <dbReference type="NCBI Taxonomy" id="7955"/>
    <lineage>
        <taxon>Eukaryota</taxon>
        <taxon>Metazoa</taxon>
        <taxon>Chordata</taxon>
        <taxon>Craniata</taxon>
        <taxon>Vertebrata</taxon>
        <taxon>Euteleostomi</taxon>
        <taxon>Actinopterygii</taxon>
        <taxon>Neopterygii</taxon>
        <taxon>Teleostei</taxon>
        <taxon>Ostariophysi</taxon>
        <taxon>Cypriniformes</taxon>
        <taxon>Danionidae</taxon>
        <taxon>Danioninae</taxon>
        <taxon>Danio</taxon>
    </lineage>
</organism>
<sequence>MMAASLLRRDKKSTAAHLKADLKRTDNSSGLRQLQELLDSVLNPERGSDPEALDWCKWLLAGGDGFDEFCRTVRSYDNATLCGLVWTANFVAYRCRTCGISPCMSLCAECFNNGDHTGHDFNMFRSQAGGACDCGDGNVMRESGFCNRHRLKTGENVPSVPRDLLLMSEMVLPRFIITIIQYLRDGYTEPESAADRDLQKVLQQLDPHISFLEELTKMGGAMRTVLTKILTDQQTFKELSMGQEDNVYAKKNYEKYLSALKSSGLVSVEEKGAAGGAGDGTSDAAAGAGALSLLGATATASLDDSSKEEDQDGLQGVGQRKRVKLSSSTKDPSIMDTLKHKCFLEELLFWTIKYEFPQKMVTFLLNMLPDQDYKITFTKTFVQHYAFIMKTLMKSHESDTMSNRIVHISVQLFSNEELARHVTEECQLLDIMVTVLLYMMESCLIKSELQDEENNRHVVVNCGEALLKNNTYWPLVSDFINILSHQSVAKRFLEDHSLLLLWMSFVSFFQGMNLNKRELNEHVEFESQTYYAAFAAELEACAQPMWGLLTHCKVKETQDYTKTVVRYCLETLQMWFDAIGFVDEPSLNQLTFHLPLHRYYAMFLSKGVKCQGLDLDSLLPDQEMLMKIMVHPLQIQASLSEIHSNMWVRNGLQIKGQAMTYVQSHFCNSMIDPDIYLLQVCASRLDPDYFISSVFERFKVVDLLTMASQHQNAVLDSEQERPMLEGALTFLVILCSLRIHLGMSDDEILRAEMVSQLCMNDRTHSSLLDLIPENPNPKSGVVPGSCSFEEMLSGVADFKAPVFEPGGSMQQGMYTPKAEVWEKEFDPIMVILRTVYRRDVQSAMDRYSAFLKQSGVHTGNPWPPYKERTPLHPCYKGLVRLLHCKTLHIVIFTLLYKIWMDHQNMSEHVLCMVLYLIELGLDNQVQDDKVEEEPCIEEHCHDSWFPGTSLLSNLHHVINFVRVRVPETAPEVERKRERERERETPPSTSSESATFGQNLREAQVFSLVAERRRKFQEIINRSNHEASQAVRPKSSASRWLPPGTPPQLVTEILEIRESMLSLLVKLHQKLSAKQNSLSLSWLAEVDPAHHAHGDGLTAIERILAKASARSRHSKRCLQEICGKVCPPIPPKKISPGDKKSMDKEERRQRARERQQKLLAEFASRQKSFMETAMDVESPEADAVMDVSSEESLDSEVLYDCVICGQSGPSTEDRPTGLVVLLQASSVLGHRCRSDMPKRLPTTDEEHIYPEDTCGATHDVRLSLMQRYFKDSSCLQSVSIGWDGGVYVQTCGHTLHIDCHKSYMESLRNDQVLQGISVDKGEFTCPLCRQFANSVLPCRPGRGMETGAWHAPSTKSMSTLVKEVEDLQEQLGIFPVRASIKQRDPILIESNLSKEMESVIKDIKNTTQKKYMDYGKNPGSPDNDFLFMYSVARTNLELELVHRGGNLCSGGASAAAKRSCLNQLFHVLAMHMRLYSIDSAYNPWTRLTLSTQSRENEYCDEERPEVPMLFRDVPSLLIIFILTMPQPLRKEHFTCVVKVLYSLQFTQALAALSIRFSREERLAWSNTGAAKKNLPNSDKSWESLLGHMISELTKAKDVYDTNSEETSALSSSVWSPQSIEFRLQQFCLPFLRLSCLLQHHLYGDSLPGCLVEEEFSLLTRCLGLAASVQCSGSMSSAACLEWNISAFDLISQWCSEVVALSDTPSQQSASLLGQDPQWAAPRLLQLPDNYNTIFQYYHRKSCSSCGKTPKDPALCLVCGAFVCLKGHCCKQQGVCECVLHSQHCGAATGIFLLINASVIIIIRGHRFCLWGSVYLDAHGEEDRDLRRGKPLYLCEERYRVLEQQWVAHTFDHINKRWGPHYNGL</sequence>
<evidence type="ECO:0000250" key="1">
    <source>
        <dbReference type="UniProtKB" id="Q9W3M3"/>
    </source>
</evidence>
<evidence type="ECO:0000255" key="2">
    <source>
        <dbReference type="PROSITE-ProRule" id="PRU00175"/>
    </source>
</evidence>
<evidence type="ECO:0000255" key="3">
    <source>
        <dbReference type="PROSITE-ProRule" id="PRU00508"/>
    </source>
</evidence>
<evidence type="ECO:0000256" key="4">
    <source>
        <dbReference type="SAM" id="MobiDB-lite"/>
    </source>
</evidence>
<evidence type="ECO:0000269" key="5">
    <source>
    </source>
</evidence>
<evidence type="ECO:0000303" key="6">
    <source>
    </source>
</evidence>
<evidence type="ECO:0000305" key="7"/>
<evidence type="ECO:0000312" key="8">
    <source>
        <dbReference type="EMBL" id="AAH78396.1"/>
    </source>
</evidence>
<evidence type="ECO:0000312" key="9">
    <source>
        <dbReference type="Proteomes" id="UP000000437"/>
    </source>
</evidence>
<evidence type="ECO:0000312" key="10">
    <source>
        <dbReference type="ZFIN" id="ZDB-GENE-030131-1473"/>
    </source>
</evidence>
<comment type="function">
    <text evidence="1 5">E3 ubiquitin-protein ligase which is a component of the N-end rule pathway (By similarity). Recognizes and binds to proteins bearing specific N-terminal residues, leading to their ubiquitination and subsequent degradation (By similarity). Positively regulates hedgehog/shh-signaling pathways that function in eye development, neuronal specification and somite development (PubMed:27195754). Activation of shh up-regulates transcription of ubr3, which in turn promotes hedgehog/shh signaling possibly by controlling negative regulators such as Kif7 (PubMed:27195754).</text>
</comment>
<comment type="catalytic activity">
    <reaction evidence="1">
        <text>S-ubiquitinyl-[E2 ubiquitin-conjugating enzyme]-L-cysteine + [acceptor protein]-L-lysine = [E2 ubiquitin-conjugating enzyme]-L-cysteine + N(6)-ubiquitinyl-[acceptor protein]-L-lysine.</text>
        <dbReference type="EC" id="2.3.2.27"/>
    </reaction>
</comment>
<comment type="pathway">
    <text evidence="1">Protein modification; protein ubiquitination.</text>
</comment>
<comment type="developmental stage">
    <text evidence="5">Expressed in the embryonic retina, central nervous system and trunk (at the protein level).</text>
</comment>
<comment type="disruption phenotype">
    <text evidence="5">Heterozygotes fail to form cohesive and stratified epithelium in their optic vesicles. Average somite angle is increased by 30% and the posterior central nervous system displays a gain of Rohon-Beard sensory neurons. Defects are the result of decreased Hh/shh-signaling demonstrated by the reduced expression of the Hh/shh target gene ptch2.</text>
</comment>
<comment type="similarity">
    <text evidence="7">Belongs to the E3 ubiquitin-protein ligase UBR1-like family.</text>
</comment>
<feature type="chain" id="PRO_0000441158" description="E3 ubiquitin-protein ligase ubr3">
    <location>
        <begin position="1"/>
        <end position="1863"/>
    </location>
</feature>
<feature type="zinc finger region" description="UBR-type" evidence="3">
    <location>
        <begin position="80"/>
        <end position="151"/>
    </location>
</feature>
<feature type="zinc finger region" description="RING-type; degenerate" evidence="2">
    <location>
        <begin position="1270"/>
        <end position="1328"/>
    </location>
</feature>
<feature type="region of interest" description="Disordered" evidence="4">
    <location>
        <begin position="302"/>
        <end position="330"/>
    </location>
</feature>
<feature type="region of interest" description="Disordered" evidence="4">
    <location>
        <begin position="970"/>
        <end position="995"/>
    </location>
</feature>
<feature type="region of interest" description="Disordered" evidence="4">
    <location>
        <begin position="1128"/>
        <end position="1152"/>
    </location>
</feature>
<feature type="compositionally biased region" description="Basic and acidic residues" evidence="4">
    <location>
        <begin position="971"/>
        <end position="984"/>
    </location>
</feature>
<feature type="compositionally biased region" description="Basic and acidic residues" evidence="4">
    <location>
        <begin position="1134"/>
        <end position="1152"/>
    </location>
</feature>
<feature type="sequence conflict" description="In Ref. 2; AAI16613/AAI24478." evidence="7" ref="2">
    <location>
        <begin position="1375"/>
        <end position="1386"/>
    </location>
</feature>
<feature type="sequence conflict" description="In Ref. 2; AAH78396." evidence="7" ref="2">
    <original>I</original>
    <variation>V</variation>
    <location>
        <position position="1588"/>
    </location>
</feature>
<accession>F1QJX5</accession>
<accession>Q05AJ6</accession>
<accession>Q1JPS8</accession>
<accession>Q6AZB6</accession>
<reference evidence="9" key="1">
    <citation type="journal article" date="2013" name="Nature">
        <title>The zebrafish reference genome sequence and its relationship to the human genome.</title>
        <authorList>
            <person name="Howe K."/>
            <person name="Clark M.D."/>
            <person name="Torroja C.F."/>
            <person name="Torrance J."/>
            <person name="Berthelot C."/>
            <person name="Muffato M."/>
            <person name="Collins J.E."/>
            <person name="Humphray S."/>
            <person name="McLaren K."/>
            <person name="Matthews L."/>
            <person name="McLaren S."/>
            <person name="Sealy I."/>
            <person name="Caccamo M."/>
            <person name="Churcher C."/>
            <person name="Scott C."/>
            <person name="Barrett J.C."/>
            <person name="Koch R."/>
            <person name="Rauch G.J."/>
            <person name="White S."/>
            <person name="Chow W."/>
            <person name="Kilian B."/>
            <person name="Quintais L.T."/>
            <person name="Guerra-Assuncao J.A."/>
            <person name="Zhou Y."/>
            <person name="Gu Y."/>
            <person name="Yen J."/>
            <person name="Vogel J.H."/>
            <person name="Eyre T."/>
            <person name="Redmond S."/>
            <person name="Banerjee R."/>
            <person name="Chi J."/>
            <person name="Fu B."/>
            <person name="Langley E."/>
            <person name="Maguire S.F."/>
            <person name="Laird G.K."/>
            <person name="Lloyd D."/>
            <person name="Kenyon E."/>
            <person name="Donaldson S."/>
            <person name="Sehra H."/>
            <person name="Almeida-King J."/>
            <person name="Loveland J."/>
            <person name="Trevanion S."/>
            <person name="Jones M."/>
            <person name="Quail M."/>
            <person name="Willey D."/>
            <person name="Hunt A."/>
            <person name="Burton J."/>
            <person name="Sims S."/>
            <person name="McLay K."/>
            <person name="Plumb B."/>
            <person name="Davis J."/>
            <person name="Clee C."/>
            <person name="Oliver K."/>
            <person name="Clark R."/>
            <person name="Riddle C."/>
            <person name="Elliot D."/>
            <person name="Threadgold G."/>
            <person name="Harden G."/>
            <person name="Ware D."/>
            <person name="Begum S."/>
            <person name="Mortimore B."/>
            <person name="Kerry G."/>
            <person name="Heath P."/>
            <person name="Phillimore B."/>
            <person name="Tracey A."/>
            <person name="Corby N."/>
            <person name="Dunn M."/>
            <person name="Johnson C."/>
            <person name="Wood J."/>
            <person name="Clark S."/>
            <person name="Pelan S."/>
            <person name="Griffiths G."/>
            <person name="Smith M."/>
            <person name="Glithero R."/>
            <person name="Howden P."/>
            <person name="Barker N."/>
            <person name="Lloyd C."/>
            <person name="Stevens C."/>
            <person name="Harley J."/>
            <person name="Holt K."/>
            <person name="Panagiotidis G."/>
            <person name="Lovell J."/>
            <person name="Beasley H."/>
            <person name="Henderson C."/>
            <person name="Gordon D."/>
            <person name="Auger K."/>
            <person name="Wright D."/>
            <person name="Collins J."/>
            <person name="Raisen C."/>
            <person name="Dyer L."/>
            <person name="Leung K."/>
            <person name="Robertson L."/>
            <person name="Ambridge K."/>
            <person name="Leongamornlert D."/>
            <person name="McGuire S."/>
            <person name="Gilderthorp R."/>
            <person name="Griffiths C."/>
            <person name="Manthravadi D."/>
            <person name="Nichol S."/>
            <person name="Barker G."/>
            <person name="Whitehead S."/>
            <person name="Kay M."/>
            <person name="Brown J."/>
            <person name="Murnane C."/>
            <person name="Gray E."/>
            <person name="Humphries M."/>
            <person name="Sycamore N."/>
            <person name="Barker D."/>
            <person name="Saunders D."/>
            <person name="Wallis J."/>
            <person name="Babbage A."/>
            <person name="Hammond S."/>
            <person name="Mashreghi-Mohammadi M."/>
            <person name="Barr L."/>
            <person name="Martin S."/>
            <person name="Wray P."/>
            <person name="Ellington A."/>
            <person name="Matthews N."/>
            <person name="Ellwood M."/>
            <person name="Woodmansey R."/>
            <person name="Clark G."/>
            <person name="Cooper J."/>
            <person name="Tromans A."/>
            <person name="Grafham D."/>
            <person name="Skuce C."/>
            <person name="Pandian R."/>
            <person name="Andrews R."/>
            <person name="Harrison E."/>
            <person name="Kimberley A."/>
            <person name="Garnett J."/>
            <person name="Fosker N."/>
            <person name="Hall R."/>
            <person name="Garner P."/>
            <person name="Kelly D."/>
            <person name="Bird C."/>
            <person name="Palmer S."/>
            <person name="Gehring I."/>
            <person name="Berger A."/>
            <person name="Dooley C.M."/>
            <person name="Ersan-Urun Z."/>
            <person name="Eser C."/>
            <person name="Geiger H."/>
            <person name="Geisler M."/>
            <person name="Karotki L."/>
            <person name="Kirn A."/>
            <person name="Konantz J."/>
            <person name="Konantz M."/>
            <person name="Oberlander M."/>
            <person name="Rudolph-Geiger S."/>
            <person name="Teucke M."/>
            <person name="Lanz C."/>
            <person name="Raddatz G."/>
            <person name="Osoegawa K."/>
            <person name="Zhu B."/>
            <person name="Rapp A."/>
            <person name="Widaa S."/>
            <person name="Langford C."/>
            <person name="Yang F."/>
            <person name="Schuster S.C."/>
            <person name="Carter N.P."/>
            <person name="Harrow J."/>
            <person name="Ning Z."/>
            <person name="Herrero J."/>
            <person name="Searle S.M."/>
            <person name="Enright A."/>
            <person name="Geisler R."/>
            <person name="Plasterk R.H."/>
            <person name="Lee C."/>
            <person name="Westerfield M."/>
            <person name="de Jong P.J."/>
            <person name="Zon L.I."/>
            <person name="Postlethwait J.H."/>
            <person name="Nusslein-Volhard C."/>
            <person name="Hubbard T.J."/>
            <person name="Roest Crollius H."/>
            <person name="Rogers J."/>
            <person name="Stemple D.L."/>
        </authorList>
    </citation>
    <scope>NUCLEOTIDE SEQUENCE [LARGE SCALE GENOMIC DNA]</scope>
    <source>
        <strain evidence="9">Tuebingen</strain>
    </source>
</reference>
<reference evidence="8" key="2">
    <citation type="submission" date="2006-05" db="EMBL/GenBank/DDBJ databases">
        <authorList>
            <consortium name="NIH - Zebrafish Gene Collection (ZGC) project"/>
        </authorList>
    </citation>
    <scope>NUCLEOTIDE SEQUENCE [LARGE SCALE MRNA] OF 1245-1863</scope>
</reference>
<reference evidence="7" key="3">
    <citation type="journal article" date="2016" name="PLoS Genet.">
        <title>Ubr3, a Novel Modulator of Hh Signaling Affects the Degradation of Costal-2 and Kif7 through Poly-ubiquitination.</title>
        <authorList>
            <person name="Li T."/>
            <person name="Fan J."/>
            <person name="Blanco-Sanchez B."/>
            <person name="Giagtzoglou N."/>
            <person name="Lin G."/>
            <person name="Yamamoto S."/>
            <person name="Jaiswal M."/>
            <person name="Chen K."/>
            <person name="Zhang J."/>
            <person name="Wei W."/>
            <person name="Lewis M.T."/>
            <person name="Groves A.K."/>
            <person name="Westerfield M."/>
            <person name="Jia J."/>
            <person name="Bellen H.J."/>
        </authorList>
    </citation>
    <scope>FUNCTION</scope>
    <scope>DEVELOPMENTAL STAGE</scope>
    <scope>DISRUPTION PHENOTYPE</scope>
</reference>
<name>UBR3_DANRE</name>
<keyword id="KW-0479">Metal-binding</keyword>
<keyword id="KW-1185">Reference proteome</keyword>
<keyword id="KW-0808">Transferase</keyword>
<keyword id="KW-0833">Ubl conjugation pathway</keyword>
<keyword id="KW-0862">Zinc</keyword>
<keyword id="KW-0863">Zinc-finger</keyword>